<reference key="1">
    <citation type="journal article" date="2008" name="DNA Res.">
        <title>Complete genome sequence and comparative analysis of the wild-type commensal Escherichia coli strain SE11 isolated from a healthy adult.</title>
        <authorList>
            <person name="Oshima K."/>
            <person name="Toh H."/>
            <person name="Ogura Y."/>
            <person name="Sasamoto H."/>
            <person name="Morita H."/>
            <person name="Park S.-H."/>
            <person name="Ooka T."/>
            <person name="Iyoda S."/>
            <person name="Taylor T.D."/>
            <person name="Hayashi T."/>
            <person name="Itoh K."/>
            <person name="Hattori M."/>
        </authorList>
    </citation>
    <scope>NUCLEOTIDE SEQUENCE [LARGE SCALE GENOMIC DNA]</scope>
    <source>
        <strain>SE11</strain>
    </source>
</reference>
<proteinExistence type="inferred from homology"/>
<organism>
    <name type="scientific">Escherichia coli (strain SE11)</name>
    <dbReference type="NCBI Taxonomy" id="409438"/>
    <lineage>
        <taxon>Bacteria</taxon>
        <taxon>Pseudomonadati</taxon>
        <taxon>Pseudomonadota</taxon>
        <taxon>Gammaproteobacteria</taxon>
        <taxon>Enterobacterales</taxon>
        <taxon>Enterobacteriaceae</taxon>
        <taxon>Escherichia</taxon>
    </lineage>
</organism>
<sequence length="151" mass="17033">MTTNTHTLQIEEILELLPHRFPFLLVDRVLDFEEGRFLRAVKNVSVNEPFFQGHFPGKPIFPGVLILEAMAQATGILAFKSVGKLEPGELYYFAGIDEARFKRPVVPGDQMIMEVTFEKTRRGLTRFKGVALVDGKVVCEATMMCARSREA</sequence>
<comment type="function">
    <text evidence="1">Involved in unsaturated fatty acids biosynthesis. Catalyzes the dehydration of short chain beta-hydroxyacyl-ACPs and long chain saturated and unsaturated beta-hydroxyacyl-ACPs.</text>
</comment>
<comment type="catalytic activity">
    <reaction evidence="1">
        <text>a (3R)-hydroxyacyl-[ACP] = a (2E)-enoyl-[ACP] + H2O</text>
        <dbReference type="Rhea" id="RHEA:13097"/>
        <dbReference type="Rhea" id="RHEA-COMP:9925"/>
        <dbReference type="Rhea" id="RHEA-COMP:9945"/>
        <dbReference type="ChEBI" id="CHEBI:15377"/>
        <dbReference type="ChEBI" id="CHEBI:78784"/>
        <dbReference type="ChEBI" id="CHEBI:78827"/>
        <dbReference type="EC" id="4.2.1.59"/>
    </reaction>
</comment>
<comment type="subunit">
    <text evidence="1">Oligomer.</text>
</comment>
<comment type="subcellular location">
    <subcellularLocation>
        <location evidence="1">Cytoplasm</location>
    </subcellularLocation>
</comment>
<comment type="PTM">
    <text evidence="1">The N-terminus is blocked.</text>
</comment>
<comment type="similarity">
    <text evidence="1">Belongs to the thioester dehydratase family. FabZ subfamily.</text>
</comment>
<dbReference type="EC" id="4.2.1.59" evidence="1"/>
<dbReference type="EMBL" id="AP009240">
    <property type="protein sequence ID" value="BAG75703.1"/>
    <property type="molecule type" value="Genomic_DNA"/>
</dbReference>
<dbReference type="RefSeq" id="WP_000210739.1">
    <property type="nucleotide sequence ID" value="NC_011415.1"/>
</dbReference>
<dbReference type="SMR" id="B6HZF4"/>
<dbReference type="GeneID" id="93777245"/>
<dbReference type="KEGG" id="ecy:ECSE_0179"/>
<dbReference type="HOGENOM" id="CLU_078912_1_0_6"/>
<dbReference type="Proteomes" id="UP000008199">
    <property type="component" value="Chromosome"/>
</dbReference>
<dbReference type="GO" id="GO:0005737">
    <property type="term" value="C:cytoplasm"/>
    <property type="evidence" value="ECO:0007669"/>
    <property type="project" value="UniProtKB-SubCell"/>
</dbReference>
<dbReference type="GO" id="GO:0016020">
    <property type="term" value="C:membrane"/>
    <property type="evidence" value="ECO:0007669"/>
    <property type="project" value="GOC"/>
</dbReference>
<dbReference type="GO" id="GO:0019171">
    <property type="term" value="F:(3R)-hydroxyacyl-[acyl-carrier-protein] dehydratase activity"/>
    <property type="evidence" value="ECO:0007669"/>
    <property type="project" value="UniProtKB-EC"/>
</dbReference>
<dbReference type="GO" id="GO:0006633">
    <property type="term" value="P:fatty acid biosynthetic process"/>
    <property type="evidence" value="ECO:0007669"/>
    <property type="project" value="UniProtKB-UniRule"/>
</dbReference>
<dbReference type="GO" id="GO:0009245">
    <property type="term" value="P:lipid A biosynthetic process"/>
    <property type="evidence" value="ECO:0007669"/>
    <property type="project" value="UniProtKB-UniRule"/>
</dbReference>
<dbReference type="CDD" id="cd01288">
    <property type="entry name" value="FabZ"/>
    <property type="match status" value="1"/>
</dbReference>
<dbReference type="FunFam" id="3.10.129.10:FF:000001">
    <property type="entry name" value="3-hydroxyacyl-[acyl-carrier-protein] dehydratase FabZ"/>
    <property type="match status" value="1"/>
</dbReference>
<dbReference type="Gene3D" id="3.10.129.10">
    <property type="entry name" value="Hotdog Thioesterase"/>
    <property type="match status" value="1"/>
</dbReference>
<dbReference type="HAMAP" id="MF_00406">
    <property type="entry name" value="FabZ"/>
    <property type="match status" value="1"/>
</dbReference>
<dbReference type="InterPro" id="IPR013114">
    <property type="entry name" value="FabA_FabZ"/>
</dbReference>
<dbReference type="InterPro" id="IPR010084">
    <property type="entry name" value="FabZ"/>
</dbReference>
<dbReference type="InterPro" id="IPR029069">
    <property type="entry name" value="HotDog_dom_sf"/>
</dbReference>
<dbReference type="NCBIfam" id="TIGR01750">
    <property type="entry name" value="fabZ"/>
    <property type="match status" value="1"/>
</dbReference>
<dbReference type="NCBIfam" id="NF000582">
    <property type="entry name" value="PRK00006.1"/>
    <property type="match status" value="1"/>
</dbReference>
<dbReference type="PANTHER" id="PTHR30272">
    <property type="entry name" value="3-HYDROXYACYL-[ACYL-CARRIER-PROTEIN] DEHYDRATASE"/>
    <property type="match status" value="1"/>
</dbReference>
<dbReference type="PANTHER" id="PTHR30272:SF1">
    <property type="entry name" value="3-HYDROXYACYL-[ACYL-CARRIER-PROTEIN] DEHYDRATASE"/>
    <property type="match status" value="1"/>
</dbReference>
<dbReference type="Pfam" id="PF07977">
    <property type="entry name" value="FabA"/>
    <property type="match status" value="1"/>
</dbReference>
<dbReference type="SUPFAM" id="SSF54637">
    <property type="entry name" value="Thioesterase/thiol ester dehydrase-isomerase"/>
    <property type="match status" value="1"/>
</dbReference>
<protein>
    <recommendedName>
        <fullName evidence="1">3-hydroxyacyl-[acyl-carrier-protein] dehydratase FabZ</fullName>
        <ecNumber evidence="1">4.2.1.59</ecNumber>
    </recommendedName>
    <alternativeName>
        <fullName evidence="1">(3R)-hydroxymyristoyl-[acyl-carrier-protein] dehydratase</fullName>
        <shortName evidence="1">(3R)-hydroxymyristoyl-ACP dehydrase</shortName>
    </alternativeName>
    <alternativeName>
        <fullName evidence="1">Beta-hydroxyacyl-ACP dehydratase</fullName>
    </alternativeName>
</protein>
<gene>
    <name evidence="1" type="primary">fabZ</name>
    <name type="ordered locus">ECSE_0179</name>
</gene>
<name>FABZ_ECOSE</name>
<evidence type="ECO:0000255" key="1">
    <source>
        <dbReference type="HAMAP-Rule" id="MF_00406"/>
    </source>
</evidence>
<accession>B6HZF4</accession>
<feature type="chain" id="PRO_1000197297" description="3-hydroxyacyl-[acyl-carrier-protein] dehydratase FabZ">
    <location>
        <begin position="1"/>
        <end position="151"/>
    </location>
</feature>
<feature type="active site" evidence="1">
    <location>
        <position position="54"/>
    </location>
</feature>
<keyword id="KW-0963">Cytoplasm</keyword>
<keyword id="KW-0441">Lipid A biosynthesis</keyword>
<keyword id="KW-0444">Lipid biosynthesis</keyword>
<keyword id="KW-0443">Lipid metabolism</keyword>
<keyword id="KW-0456">Lyase</keyword>